<proteinExistence type="evidence at protein level"/>
<feature type="chain" id="PRO_0000369627" description="Ninja-family protein MODD">
    <location>
        <begin position="1"/>
        <end position="401"/>
    </location>
</feature>
<feature type="region of interest" description="Disordered" evidence="1">
    <location>
        <begin position="95"/>
        <end position="135"/>
    </location>
</feature>
<feature type="region of interest" description="Disordered" evidence="1">
    <location>
        <begin position="215"/>
        <end position="238"/>
    </location>
</feature>
<feature type="compositionally biased region" description="Low complexity" evidence="1">
    <location>
        <begin position="105"/>
        <end position="130"/>
    </location>
</feature>
<feature type="compositionally biased region" description="Polar residues" evidence="1">
    <location>
        <begin position="217"/>
        <end position="226"/>
    </location>
</feature>
<evidence type="ECO:0000256" key="1">
    <source>
        <dbReference type="SAM" id="MobiDB-lite"/>
    </source>
</evidence>
<evidence type="ECO:0000269" key="2">
    <source>
    </source>
</evidence>
<evidence type="ECO:0000303" key="3">
    <source>
    </source>
</evidence>
<evidence type="ECO:0000305" key="4"/>
<organism>
    <name type="scientific">Oryza sativa subsp. japonica</name>
    <name type="common">Rice</name>
    <dbReference type="NCBI Taxonomy" id="39947"/>
    <lineage>
        <taxon>Eukaryota</taxon>
        <taxon>Viridiplantae</taxon>
        <taxon>Streptophyta</taxon>
        <taxon>Embryophyta</taxon>
        <taxon>Tracheophyta</taxon>
        <taxon>Spermatophyta</taxon>
        <taxon>Magnoliopsida</taxon>
        <taxon>Liliopsida</taxon>
        <taxon>Poales</taxon>
        <taxon>Poaceae</taxon>
        <taxon>BOP clade</taxon>
        <taxon>Oryzoideae</taxon>
        <taxon>Oryzeae</taxon>
        <taxon>Oryzinae</taxon>
        <taxon>Oryza</taxon>
        <taxon>Oryza sativa</taxon>
    </lineage>
</organism>
<reference key="1">
    <citation type="journal article" date="2005" name="Genome Res.">
        <title>Sequence, annotation, and analysis of synteny between rice chromosome 3 and diverged grass species.</title>
        <authorList>
            <consortium name="The rice chromosome 3 sequencing consortium"/>
            <person name="Buell C.R."/>
            <person name="Yuan Q."/>
            <person name="Ouyang S."/>
            <person name="Liu J."/>
            <person name="Zhu W."/>
            <person name="Wang A."/>
            <person name="Maiti R."/>
            <person name="Haas B."/>
            <person name="Wortman J."/>
            <person name="Pertea M."/>
            <person name="Jones K.M."/>
            <person name="Kim M."/>
            <person name="Overton L."/>
            <person name="Tsitrin T."/>
            <person name="Fadrosh D."/>
            <person name="Bera J."/>
            <person name="Weaver B."/>
            <person name="Jin S."/>
            <person name="Johri S."/>
            <person name="Reardon M."/>
            <person name="Webb K."/>
            <person name="Hill J."/>
            <person name="Moffat K."/>
            <person name="Tallon L."/>
            <person name="Van Aken S."/>
            <person name="Lewis M."/>
            <person name="Utterback T."/>
            <person name="Feldblyum T."/>
            <person name="Zismann V."/>
            <person name="Iobst S."/>
            <person name="Hsiao J."/>
            <person name="de Vazeille A.R."/>
            <person name="Salzberg S.L."/>
            <person name="White O."/>
            <person name="Fraser C.M."/>
            <person name="Yu Y."/>
            <person name="Kim H."/>
            <person name="Rambo T."/>
            <person name="Currie J."/>
            <person name="Collura K."/>
            <person name="Kernodle-Thompson S."/>
            <person name="Wei F."/>
            <person name="Kudrna K."/>
            <person name="Ammiraju J.S.S."/>
            <person name="Luo M."/>
            <person name="Goicoechea J.L."/>
            <person name="Wing R.A."/>
            <person name="Henry D."/>
            <person name="Oates R."/>
            <person name="Palmer M."/>
            <person name="Pries G."/>
            <person name="Saski C."/>
            <person name="Simmons J."/>
            <person name="Soderlund C."/>
            <person name="Nelson W."/>
            <person name="de la Bastide M."/>
            <person name="Spiegel L."/>
            <person name="Nascimento L."/>
            <person name="Huang E."/>
            <person name="Preston R."/>
            <person name="Zutavern T."/>
            <person name="Palmer L."/>
            <person name="O'Shaughnessy A."/>
            <person name="Dike S."/>
            <person name="McCombie W.R."/>
            <person name="Minx P."/>
            <person name="Cordum H."/>
            <person name="Wilson R."/>
            <person name="Jin W."/>
            <person name="Lee H.R."/>
            <person name="Jiang J."/>
            <person name="Jackson S."/>
        </authorList>
    </citation>
    <scope>NUCLEOTIDE SEQUENCE [LARGE SCALE GENOMIC DNA]</scope>
    <source>
        <strain>cv. Nipponbare</strain>
    </source>
</reference>
<reference key="2">
    <citation type="journal article" date="2005" name="Nature">
        <title>The map-based sequence of the rice genome.</title>
        <authorList>
            <consortium name="International rice genome sequencing project (IRGSP)"/>
        </authorList>
    </citation>
    <scope>NUCLEOTIDE SEQUENCE [LARGE SCALE GENOMIC DNA]</scope>
    <source>
        <strain>cv. Nipponbare</strain>
    </source>
</reference>
<reference key="3">
    <citation type="journal article" date="2008" name="Nucleic Acids Res.">
        <title>The rice annotation project database (RAP-DB): 2008 update.</title>
        <authorList>
            <consortium name="The rice annotation project (RAP)"/>
        </authorList>
    </citation>
    <scope>GENOME REANNOTATION</scope>
    <source>
        <strain>cv. Nipponbare</strain>
    </source>
</reference>
<reference key="4">
    <citation type="journal article" date="2013" name="Rice">
        <title>Improvement of the Oryza sativa Nipponbare reference genome using next generation sequence and optical map data.</title>
        <authorList>
            <person name="Kawahara Y."/>
            <person name="de la Bastide M."/>
            <person name="Hamilton J.P."/>
            <person name="Kanamori H."/>
            <person name="McCombie W.R."/>
            <person name="Ouyang S."/>
            <person name="Schwartz D.C."/>
            <person name="Tanaka T."/>
            <person name="Wu J."/>
            <person name="Zhou S."/>
            <person name="Childs K.L."/>
            <person name="Davidson R.M."/>
            <person name="Lin H."/>
            <person name="Quesada-Ocampo L."/>
            <person name="Vaillancourt B."/>
            <person name="Sakai H."/>
            <person name="Lee S.S."/>
            <person name="Kim J."/>
            <person name="Numa H."/>
            <person name="Itoh T."/>
            <person name="Buell C.R."/>
            <person name="Matsumoto T."/>
        </authorList>
    </citation>
    <scope>GENOME REANNOTATION</scope>
    <source>
        <strain>cv. Nipponbare</strain>
    </source>
</reference>
<reference key="5">
    <citation type="journal article" date="2003" name="Science">
        <title>Collection, mapping, and annotation of over 28,000 cDNA clones from japonica rice.</title>
        <authorList>
            <consortium name="The rice full-length cDNA consortium"/>
        </authorList>
    </citation>
    <scope>NUCLEOTIDE SEQUENCE [LARGE SCALE MRNA]</scope>
    <source>
        <strain>cv. Nipponbare</strain>
    </source>
</reference>
<reference key="6">
    <citation type="journal article" date="2016" name="Plant Cell">
        <title>MODD mediates deactivation and degradation of OsbZIP46 to negatively regulate ABA signaling and drought resistance in rice.</title>
        <authorList>
            <person name="Tang N."/>
            <person name="Ma S."/>
            <person name="Zong W."/>
            <person name="Yang N."/>
            <person name="Lv Y."/>
            <person name="Yan C."/>
            <person name="Guo Z."/>
            <person name="Li J."/>
            <person name="Li X."/>
            <person name="Xiang Y."/>
            <person name="Song H."/>
            <person name="Xiao J."/>
            <person name="Li X."/>
            <person name="Xiong L."/>
        </authorList>
    </citation>
    <scope>FUNCTION</scope>
    <scope>INTERACTION WITH BZIP46; TPR3 AND PUB70</scope>
    <scope>SUBCELLULAR LOCATION</scope>
    <scope>INDUCTION</scope>
    <scope>DISRUPTION PHENOTYPE</scope>
</reference>
<protein>
    <recommendedName>
        <fullName evidence="4">Ninja-family protein MODD</fullName>
    </recommendedName>
    <alternativeName>
        <fullName evidence="3">Protein MEDIATOR OF OSBZIP46 DEACTIVATION AND DEGRADATION</fullName>
    </alternativeName>
</protein>
<dbReference type="EMBL" id="DP000009">
    <property type="protein sequence ID" value="ABF94628.1"/>
    <property type="molecule type" value="Genomic_DNA"/>
</dbReference>
<dbReference type="EMBL" id="AP008209">
    <property type="protein sequence ID" value="BAF11284.1"/>
    <property type="status" value="ALT_SEQ"/>
    <property type="molecule type" value="Genomic_DNA"/>
</dbReference>
<dbReference type="EMBL" id="AP008209">
    <property type="protein sequence ID" value="BAH92041.1"/>
    <property type="molecule type" value="Genomic_DNA"/>
</dbReference>
<dbReference type="EMBL" id="AP014959">
    <property type="protein sequence ID" value="BAS82953.1"/>
    <property type="molecule type" value="Genomic_DNA"/>
</dbReference>
<dbReference type="EMBL" id="AK100623">
    <property type="protein sequence ID" value="BAG94685.1"/>
    <property type="molecule type" value="mRNA"/>
</dbReference>
<dbReference type="RefSeq" id="XP_015632992.1">
    <property type="nucleotide sequence ID" value="XM_015777506.1"/>
</dbReference>
<dbReference type="FunCoup" id="Q10Q07">
    <property type="interactions" value="7"/>
</dbReference>
<dbReference type="STRING" id="39947.Q10Q07"/>
<dbReference type="PaxDb" id="39947-Q10Q07"/>
<dbReference type="EnsemblPlants" id="Os03t0214200-01">
    <property type="protein sequence ID" value="Os03t0214200-01"/>
    <property type="gene ID" value="Os03g0214200"/>
</dbReference>
<dbReference type="Gramene" id="Os03t0214200-01">
    <property type="protein sequence ID" value="Os03t0214200-01"/>
    <property type="gene ID" value="Os03g0214200"/>
</dbReference>
<dbReference type="KEGG" id="dosa:Os03g0214200"/>
<dbReference type="eggNOG" id="ENOG502QW6K">
    <property type="taxonomic scope" value="Eukaryota"/>
</dbReference>
<dbReference type="HOGENOM" id="CLU_034695_0_0_1"/>
<dbReference type="InParanoid" id="Q10Q07"/>
<dbReference type="OMA" id="MNKFPRD"/>
<dbReference type="OrthoDB" id="667358at2759"/>
<dbReference type="Proteomes" id="UP000000763">
    <property type="component" value="Chromosome 3"/>
</dbReference>
<dbReference type="Proteomes" id="UP000059680">
    <property type="component" value="Chromosome 3"/>
</dbReference>
<dbReference type="ExpressionAtlas" id="Q10Q07">
    <property type="expression patterns" value="baseline and differential"/>
</dbReference>
<dbReference type="GO" id="GO:0005634">
    <property type="term" value="C:nucleus"/>
    <property type="evidence" value="ECO:0000318"/>
    <property type="project" value="GO_Central"/>
</dbReference>
<dbReference type="GO" id="GO:0045892">
    <property type="term" value="P:negative regulation of DNA-templated transcription"/>
    <property type="evidence" value="ECO:0000318"/>
    <property type="project" value="GO_Central"/>
</dbReference>
<dbReference type="GO" id="GO:0007165">
    <property type="term" value="P:signal transduction"/>
    <property type="evidence" value="ECO:0007669"/>
    <property type="project" value="InterPro"/>
</dbReference>
<dbReference type="InterPro" id="IPR031307">
    <property type="entry name" value="Ninja_fam"/>
</dbReference>
<dbReference type="InterPro" id="IPR012463">
    <property type="entry name" value="Ninja_motif"/>
</dbReference>
<dbReference type="InterPro" id="IPR032310">
    <property type="entry name" value="NLS_NINJA_AFP-like"/>
</dbReference>
<dbReference type="InterPro" id="IPR032308">
    <property type="entry name" value="TDBD"/>
</dbReference>
<dbReference type="PANTHER" id="PTHR31413">
    <property type="entry name" value="AFP HOMOLOG 2"/>
    <property type="match status" value="1"/>
</dbReference>
<dbReference type="PANTHER" id="PTHR31413:SF49">
    <property type="entry name" value="NINJA-FAMILY PROTEIN MODD"/>
    <property type="match status" value="1"/>
</dbReference>
<dbReference type="Pfam" id="PF07897">
    <property type="entry name" value="EAR"/>
    <property type="match status" value="1"/>
</dbReference>
<dbReference type="Pfam" id="PF16136">
    <property type="entry name" value="NLS_NINJA_AFP"/>
    <property type="match status" value="1"/>
</dbReference>
<dbReference type="Pfam" id="PF16135">
    <property type="entry name" value="TDBD"/>
    <property type="match status" value="1"/>
</dbReference>
<comment type="function">
    <text evidence="2">Acts as a negative regulator of abscisic acid (ABA) signaling and drought tolerance. Mediates deactivation and degradation of BZIP46, a positive regulator of ABA signaling and drought stress tolerance. Represses BZIP46 activity via interaction with the TPR3-HDAC1 corepressor complex and down-regulation of the histone acetylation level at BZIP46 target genes. Promotes BZIP46 degradation via interaction with the U-box type ubiquitin E3 ligase PUB70.</text>
</comment>
<comment type="subunit">
    <text evidence="2">Interacts with BZIP46, TPR3 and PUB70.</text>
</comment>
<comment type="subcellular location">
    <subcellularLocation>
        <location evidence="2">Nucleus</location>
    </subcellularLocation>
</comment>
<comment type="induction">
    <text evidence="2">Induced by abscisic acid (ABA) and drought stress.</text>
</comment>
<comment type="disruption phenotype">
    <text evidence="2">No visible phenotype under normal growth conditions, but mutant plants exhibit increased abscisic acid (ABA) sensitivity and drought resistance.</text>
</comment>
<comment type="similarity">
    <text evidence="4">Belongs to the Ninja family.</text>
</comment>
<comment type="sequence caution" evidence="4">
    <conflict type="erroneous gene model prediction">
        <sequence resource="EMBL-CDS" id="BAF11284"/>
    </conflict>
</comment>
<accession>Q10Q07</accession>
<accession>C7IZR5</accession>
<accession>Q0DU04</accession>
<name>NNJA1_ORYSJ</name>
<gene>
    <name evidence="3" type="primary">MODD</name>
    <name type="ordered locus">Os03g0214200</name>
    <name type="ordered locus">LOC_Os03g11550</name>
</gene>
<sequence length="401" mass="42644">MEGFSRDLLCGIGKGGDGPRGEVRPRVDMEAEEVELNLGLSLGGRFGLDRRGEKLARSSSVAAILAAPTEPSAPPSGLFRTSSLPTVAAAEAAKKQGVDELNCRRPSGGAEAEPAAARLPASGSPSSGSSDGEGRRLEVNMTDTLMRTSSLPAGIEDEWRKRKEAQSLKRLEVKRKRIERRNSLTSNISKEAVGQILEEMNAGAEKVESCDDVATGNKKTGGNVNHSSDRNRCTGLPPVHRATYTQQRGSLSGIPTKHIPAMKGSADAEEHNVPSAATEHRNGAAIATPPFSALAVRAVALASRGEQLRATGRVAARAKSMGDVERIMMQEMPCVCTKGLPNGKRVEGFLYKYRKGEEVRIVCVCHGSFLTPAEFVKHAGGGDVANPLRHIVVNPIPPSLY</sequence>
<keyword id="KW-0539">Nucleus</keyword>
<keyword id="KW-1185">Reference proteome</keyword>